<organism>
    <name type="scientific">Photobacterium profundum (strain SS9)</name>
    <dbReference type="NCBI Taxonomy" id="298386"/>
    <lineage>
        <taxon>Bacteria</taxon>
        <taxon>Pseudomonadati</taxon>
        <taxon>Pseudomonadota</taxon>
        <taxon>Gammaproteobacteria</taxon>
        <taxon>Vibrionales</taxon>
        <taxon>Vibrionaceae</taxon>
        <taxon>Photobacterium</taxon>
    </lineage>
</organism>
<reference key="1">
    <citation type="journal article" date="2005" name="Science">
        <title>Life at depth: Photobacterium profundum genome sequence and expression analysis.</title>
        <authorList>
            <person name="Vezzi A."/>
            <person name="Campanaro S."/>
            <person name="D'Angelo M."/>
            <person name="Simonato F."/>
            <person name="Vitulo N."/>
            <person name="Lauro F.M."/>
            <person name="Cestaro A."/>
            <person name="Malacrida G."/>
            <person name="Simionati B."/>
            <person name="Cannata N."/>
            <person name="Romualdi C."/>
            <person name="Bartlett D.H."/>
            <person name="Valle G."/>
        </authorList>
    </citation>
    <scope>NUCLEOTIDE SEQUENCE [LARGE SCALE GENOMIC DNA]</scope>
    <source>
        <strain>ATCC BAA-1253 / SS9</strain>
    </source>
</reference>
<evidence type="ECO:0000255" key="1">
    <source>
        <dbReference type="HAMAP-Rule" id="MF_01959"/>
    </source>
</evidence>
<dbReference type="EMBL" id="CR378666">
    <property type="protein sequence ID" value="CAG19362.1"/>
    <property type="molecule type" value="Genomic_DNA"/>
</dbReference>
<dbReference type="RefSeq" id="WP_011217696.1">
    <property type="nucleotide sequence ID" value="NC_006370.1"/>
</dbReference>
<dbReference type="SMR" id="Q6LTL4"/>
<dbReference type="STRING" id="298386.PBPRA0951"/>
<dbReference type="KEGG" id="ppr:PBPRA0951"/>
<dbReference type="eggNOG" id="COG2332">
    <property type="taxonomic scope" value="Bacteria"/>
</dbReference>
<dbReference type="HOGENOM" id="CLU_079503_1_0_6"/>
<dbReference type="Proteomes" id="UP000000593">
    <property type="component" value="Chromosome 1"/>
</dbReference>
<dbReference type="GO" id="GO:0005886">
    <property type="term" value="C:plasma membrane"/>
    <property type="evidence" value="ECO:0007669"/>
    <property type="project" value="UniProtKB-SubCell"/>
</dbReference>
<dbReference type="GO" id="GO:0020037">
    <property type="term" value="F:heme binding"/>
    <property type="evidence" value="ECO:0007669"/>
    <property type="project" value="InterPro"/>
</dbReference>
<dbReference type="GO" id="GO:0046872">
    <property type="term" value="F:metal ion binding"/>
    <property type="evidence" value="ECO:0007669"/>
    <property type="project" value="UniProtKB-KW"/>
</dbReference>
<dbReference type="GO" id="GO:0017004">
    <property type="term" value="P:cytochrome complex assembly"/>
    <property type="evidence" value="ECO:0007669"/>
    <property type="project" value="UniProtKB-KW"/>
</dbReference>
<dbReference type="FunFam" id="2.40.50.140:FF:000104">
    <property type="entry name" value="Cytochrome c-type biogenesis protein CcmE"/>
    <property type="match status" value="1"/>
</dbReference>
<dbReference type="Gene3D" id="2.40.50.140">
    <property type="entry name" value="Nucleic acid-binding proteins"/>
    <property type="match status" value="1"/>
</dbReference>
<dbReference type="HAMAP" id="MF_01959">
    <property type="entry name" value="CcmE"/>
    <property type="match status" value="1"/>
</dbReference>
<dbReference type="InterPro" id="IPR004329">
    <property type="entry name" value="CcmE"/>
</dbReference>
<dbReference type="InterPro" id="IPR036127">
    <property type="entry name" value="CcmE-like_sf"/>
</dbReference>
<dbReference type="InterPro" id="IPR012340">
    <property type="entry name" value="NA-bd_OB-fold"/>
</dbReference>
<dbReference type="NCBIfam" id="NF009638">
    <property type="entry name" value="PRK13165.1"/>
    <property type="match status" value="1"/>
</dbReference>
<dbReference type="NCBIfam" id="NF009727">
    <property type="entry name" value="PRK13254.1-1"/>
    <property type="match status" value="1"/>
</dbReference>
<dbReference type="NCBIfam" id="NF009729">
    <property type="entry name" value="PRK13254.1-3"/>
    <property type="match status" value="1"/>
</dbReference>
<dbReference type="NCBIfam" id="NF009731">
    <property type="entry name" value="PRK13254.1-5"/>
    <property type="match status" value="1"/>
</dbReference>
<dbReference type="PANTHER" id="PTHR34128">
    <property type="entry name" value="CYTOCHROME C-TYPE BIOGENESIS PROTEIN CCME HOMOLOG, MITOCHONDRIAL"/>
    <property type="match status" value="1"/>
</dbReference>
<dbReference type="PANTHER" id="PTHR34128:SF2">
    <property type="entry name" value="CYTOCHROME C-TYPE BIOGENESIS PROTEIN CCME HOMOLOG, MITOCHONDRIAL"/>
    <property type="match status" value="1"/>
</dbReference>
<dbReference type="Pfam" id="PF03100">
    <property type="entry name" value="CcmE"/>
    <property type="match status" value="1"/>
</dbReference>
<dbReference type="SUPFAM" id="SSF82093">
    <property type="entry name" value="Heme chaperone CcmE"/>
    <property type="match status" value="1"/>
</dbReference>
<name>CCME_PHOPR</name>
<accession>Q6LTL4</accession>
<sequence length="161" mass="17704">MNPRRKKRLTLAVALVFGLGATIGLMLYALSQNMDLFYTPTELVQGKPDGTKPEVGQRLRIGGMVVEGSVKRDPQSLIVTFEVADVGPAVTITYNGILPDLFREGQGIVAQGVLVNSTTIEAHEVLAKHDEEYMPPEIAEAMKKTHEPLQYSDEQKQGRVQ</sequence>
<comment type="function">
    <text evidence="1">Heme chaperone required for the biogenesis of c-type cytochromes. Transiently binds heme delivered by CcmC and transfers the heme to apo-cytochromes in a process facilitated by CcmF and CcmH.</text>
</comment>
<comment type="subcellular location">
    <subcellularLocation>
        <location evidence="1">Cell inner membrane</location>
        <topology evidence="1">Single-pass type II membrane protein</topology>
        <orientation evidence="1">Periplasmic side</orientation>
    </subcellularLocation>
</comment>
<comment type="similarity">
    <text evidence="1">Belongs to the CcmE/CycJ family.</text>
</comment>
<proteinExistence type="inferred from homology"/>
<feature type="chain" id="PRO_0000238832" description="Cytochrome c-type biogenesis protein CcmE">
    <location>
        <begin position="1"/>
        <end position="161"/>
    </location>
</feature>
<feature type="topological domain" description="Cytoplasmic" evidence="1">
    <location>
        <begin position="1"/>
        <end position="8"/>
    </location>
</feature>
<feature type="transmembrane region" description="Helical; Signal-anchor for type II membrane protein" evidence="1">
    <location>
        <begin position="9"/>
        <end position="29"/>
    </location>
</feature>
<feature type="topological domain" description="Periplasmic" evidence="1">
    <location>
        <begin position="30"/>
        <end position="161"/>
    </location>
</feature>
<feature type="binding site" description="covalent" evidence="1">
    <location>
        <position position="129"/>
    </location>
    <ligand>
        <name>heme</name>
        <dbReference type="ChEBI" id="CHEBI:30413"/>
    </ligand>
</feature>
<feature type="binding site" description="axial binding residue" evidence="1">
    <location>
        <position position="133"/>
    </location>
    <ligand>
        <name>heme</name>
        <dbReference type="ChEBI" id="CHEBI:30413"/>
    </ligand>
    <ligandPart>
        <name>Fe</name>
        <dbReference type="ChEBI" id="CHEBI:18248"/>
    </ligandPart>
</feature>
<protein>
    <recommendedName>
        <fullName evidence="1">Cytochrome c-type biogenesis protein CcmE</fullName>
    </recommendedName>
    <alternativeName>
        <fullName evidence="1">Cytochrome c maturation protein E</fullName>
    </alternativeName>
    <alternativeName>
        <fullName evidence="1">Heme chaperone CcmE</fullName>
    </alternativeName>
</protein>
<keyword id="KW-0997">Cell inner membrane</keyword>
<keyword id="KW-1003">Cell membrane</keyword>
<keyword id="KW-0201">Cytochrome c-type biogenesis</keyword>
<keyword id="KW-0349">Heme</keyword>
<keyword id="KW-0408">Iron</keyword>
<keyword id="KW-0472">Membrane</keyword>
<keyword id="KW-0479">Metal-binding</keyword>
<keyword id="KW-1185">Reference proteome</keyword>
<keyword id="KW-0735">Signal-anchor</keyword>
<keyword id="KW-0812">Transmembrane</keyword>
<keyword id="KW-1133">Transmembrane helix</keyword>
<gene>
    <name evidence="1" type="primary">ccmE</name>
    <name evidence="1" type="synonym">cycJ</name>
    <name type="ordered locus">PBPRA0951</name>
</gene>